<proteinExistence type="evidence at transcript level"/>
<organism>
    <name type="scientific">Mus musculus</name>
    <name type="common">Mouse</name>
    <dbReference type="NCBI Taxonomy" id="10090"/>
    <lineage>
        <taxon>Eukaryota</taxon>
        <taxon>Metazoa</taxon>
        <taxon>Chordata</taxon>
        <taxon>Craniata</taxon>
        <taxon>Vertebrata</taxon>
        <taxon>Euteleostomi</taxon>
        <taxon>Mammalia</taxon>
        <taxon>Eutheria</taxon>
        <taxon>Euarchontoglires</taxon>
        <taxon>Glires</taxon>
        <taxon>Rodentia</taxon>
        <taxon>Myomorpha</taxon>
        <taxon>Muroidea</taxon>
        <taxon>Muridae</taxon>
        <taxon>Murinae</taxon>
        <taxon>Mus</taxon>
        <taxon>Mus</taxon>
    </lineage>
</organism>
<keyword id="KW-0025">Alternative splicing</keyword>
<keyword id="KW-0256">Endoplasmic reticulum</keyword>
<keyword id="KW-0325">Glycoprotein</keyword>
<keyword id="KW-0472">Membrane</keyword>
<keyword id="KW-1185">Reference proteome</keyword>
<keyword id="KW-0677">Repeat</keyword>
<keyword id="KW-0802">TPR repeat</keyword>
<keyword id="KW-0808">Transferase</keyword>
<keyword id="KW-0812">Transmembrane</keyword>
<keyword id="KW-1133">Transmembrane helix</keyword>
<feature type="chain" id="PRO_0000280296" description="Protein O-mannosyl-transferase TMTC4">
    <location>
        <begin position="1"/>
        <end position="741"/>
    </location>
</feature>
<feature type="topological domain" description="Cytoplasmic" evidence="6">
    <location>
        <begin position="1"/>
        <end position="10"/>
    </location>
</feature>
<feature type="transmembrane region" description="Helical" evidence="2">
    <location>
        <begin position="11"/>
        <end position="31"/>
    </location>
</feature>
<feature type="topological domain" description="Extracellular" evidence="6">
    <location>
        <begin position="32"/>
        <end position="110"/>
    </location>
</feature>
<feature type="transmembrane region" description="Helical" evidence="2">
    <location>
        <begin position="111"/>
        <end position="131"/>
    </location>
</feature>
<feature type="topological domain" description="Cytoplasmic" evidence="6">
    <location>
        <begin position="132"/>
        <end position="146"/>
    </location>
</feature>
<feature type="transmembrane region" description="Helical" evidence="2">
    <location>
        <begin position="147"/>
        <end position="166"/>
    </location>
</feature>
<feature type="transmembrane region" description="Helical" evidence="2">
    <location>
        <begin position="167"/>
        <end position="185"/>
    </location>
</feature>
<feature type="topological domain" description="Cytoplasmic" evidence="6">
    <location>
        <begin position="186"/>
        <end position="198"/>
    </location>
</feature>
<feature type="transmembrane region" description="Helical" evidence="2">
    <location>
        <begin position="199"/>
        <end position="219"/>
    </location>
</feature>
<feature type="topological domain" description="Extracellular" evidence="6">
    <location>
        <begin position="220"/>
        <end position="224"/>
    </location>
</feature>
<feature type="transmembrane region" description="Helical" evidence="2">
    <location>
        <begin position="225"/>
        <end position="245"/>
    </location>
</feature>
<feature type="topological domain" description="Cytoplasmic" evidence="6">
    <location>
        <begin position="246"/>
        <end position="265"/>
    </location>
</feature>
<feature type="transmembrane region" description="Helical" evidence="2">
    <location>
        <begin position="266"/>
        <end position="286"/>
    </location>
</feature>
<feature type="topological domain" description="Extracellular" evidence="6">
    <location>
        <begin position="287"/>
        <end position="354"/>
    </location>
</feature>
<feature type="transmembrane region" description="Helical" evidence="2">
    <location>
        <begin position="355"/>
        <end position="375"/>
    </location>
</feature>
<feature type="topological domain" description="Cytoplasmic" evidence="6">
    <location>
        <begin position="376"/>
        <end position="382"/>
    </location>
</feature>
<feature type="transmembrane region" description="Helical" evidence="2">
    <location>
        <begin position="383"/>
        <end position="403"/>
    </location>
</feature>
<feature type="topological domain" description="Extracellular" evidence="6">
    <location>
        <begin position="404"/>
        <end position="412"/>
    </location>
</feature>
<feature type="transmembrane region" description="Helical" evidence="2">
    <location>
        <begin position="413"/>
        <end position="433"/>
    </location>
</feature>
<feature type="topological domain" description="Cytoplasmic" evidence="6">
    <location>
        <begin position="434"/>
        <end position="441"/>
    </location>
</feature>
<feature type="transmembrane region" description="Helical" evidence="2">
    <location>
        <begin position="442"/>
        <end position="462"/>
    </location>
</feature>
<feature type="topological domain" description="Extracellular" evidence="6">
    <location>
        <begin position="463"/>
        <end position="741"/>
    </location>
</feature>
<feature type="repeat" description="TPR 1" evidence="3">
    <location>
        <begin position="482"/>
        <end position="515"/>
    </location>
</feature>
<feature type="repeat" description="TPR 2" evidence="3">
    <location>
        <begin position="516"/>
        <end position="549"/>
    </location>
</feature>
<feature type="repeat" description="TPR 3" evidence="3">
    <location>
        <begin position="550"/>
        <end position="583"/>
    </location>
</feature>
<feature type="repeat" description="TPR 4" evidence="3">
    <location>
        <begin position="584"/>
        <end position="617"/>
    </location>
</feature>
<feature type="repeat" description="TPR 5" evidence="3">
    <location>
        <begin position="618"/>
        <end position="651"/>
    </location>
</feature>
<feature type="repeat" description="TPR 6" evidence="3">
    <location>
        <begin position="652"/>
        <end position="685"/>
    </location>
</feature>
<feature type="repeat" description="TPR 7" evidence="3">
    <location>
        <begin position="686"/>
        <end position="719"/>
    </location>
</feature>
<feature type="glycosylation site" description="N-linked (GlcNAc...) asparagine" evidence="4">
    <location>
        <position position="77"/>
    </location>
</feature>
<feature type="glycosylation site" description="N-linked (GlcNAc...) asparagine" evidence="4">
    <location>
        <position position="497"/>
    </location>
</feature>
<feature type="glycosylation site" description="N-linked (GlcNAc...) asparagine" evidence="4">
    <location>
        <position position="609"/>
    </location>
</feature>
<feature type="glycosylation site" description="N-linked (GlcNAc...) asparagine" evidence="4">
    <location>
        <position position="725"/>
    </location>
</feature>
<feature type="splice variant" id="VSP_023624" description="In isoform 3." evidence="6">
    <location>
        <begin position="1"/>
        <end position="518"/>
    </location>
</feature>
<feature type="splice variant" id="VSP_023625" description="In isoform 2." evidence="6">
    <original>YADLNRHVDALNAW</original>
    <variation>VRAGGPSFPSPKTE</variation>
    <location>
        <begin position="594"/>
        <end position="607"/>
    </location>
</feature>
<feature type="splice variant" id="VSP_023626" description="In isoform 2." evidence="6">
    <location>
        <begin position="608"/>
        <end position="741"/>
    </location>
</feature>
<feature type="sequence conflict" description="In Ref. 1; BAB29698." evidence="6" ref="1">
    <original>N</original>
    <variation>I</variation>
    <location>
        <position position="684"/>
    </location>
</feature>
<protein>
    <recommendedName>
        <fullName evidence="6">Protein O-mannosyl-transferase TMTC4</fullName>
        <ecNumber evidence="1">2.4.1.109</ecNumber>
    </recommendedName>
    <alternativeName>
        <fullName evidence="1">Transmembrane O-mannosyltransferase targeting cadherins 4</fullName>
    </alternativeName>
    <alternativeName>
        <fullName evidence="7">Transmembrane and tetratricopeptide repeat-containing 4</fullName>
    </alternativeName>
</protein>
<gene>
    <name evidence="7" type="primary">Tmtc4</name>
</gene>
<dbReference type="EC" id="2.4.1.109" evidence="1"/>
<dbReference type="EMBL" id="AK015064">
    <property type="protein sequence ID" value="BAB29698.1"/>
    <property type="molecule type" value="mRNA"/>
</dbReference>
<dbReference type="EMBL" id="AK017580">
    <property type="protein sequence ID" value="BAB30817.1"/>
    <property type="molecule type" value="mRNA"/>
</dbReference>
<dbReference type="EMBL" id="AK028333">
    <property type="protein sequence ID" value="BAC25886.1"/>
    <property type="molecule type" value="mRNA"/>
</dbReference>
<dbReference type="EMBL" id="AK033947">
    <property type="protein sequence ID" value="BAC28522.1"/>
    <property type="molecule type" value="mRNA"/>
</dbReference>
<dbReference type="EMBL" id="AK039093">
    <property type="protein sequence ID" value="BAC30236.1"/>
    <property type="status" value="ALT_FRAME"/>
    <property type="molecule type" value="mRNA"/>
</dbReference>
<dbReference type="EMBL" id="AK043293">
    <property type="protein sequence ID" value="BAC31518.1"/>
    <property type="molecule type" value="mRNA"/>
</dbReference>
<dbReference type="EMBL" id="AK044391">
    <property type="protein sequence ID" value="BAC31900.1"/>
    <property type="molecule type" value="mRNA"/>
</dbReference>
<dbReference type="EMBL" id="AK045271">
    <property type="protein sequence ID" value="BAC32288.1"/>
    <property type="molecule type" value="mRNA"/>
</dbReference>
<dbReference type="EMBL" id="AK049748">
    <property type="protein sequence ID" value="BAC33902.1"/>
    <property type="molecule type" value="mRNA"/>
</dbReference>
<dbReference type="EMBL" id="AK082526">
    <property type="protein sequence ID" value="BAC38520.1"/>
    <property type="status" value="ALT_INIT"/>
    <property type="molecule type" value="mRNA"/>
</dbReference>
<dbReference type="EMBL" id="BC031368">
    <property type="protein sequence ID" value="AAH31368.1"/>
    <property type="status" value="ALT_INIT"/>
    <property type="molecule type" value="mRNA"/>
</dbReference>
<dbReference type="CCDS" id="CCDS27352.1">
    <molecule id="Q8BG19-1"/>
</dbReference>
<dbReference type="RefSeq" id="NP_001347527.1">
    <molecule id="Q8BG19-1"/>
    <property type="nucleotide sequence ID" value="NM_001360598.1"/>
</dbReference>
<dbReference type="RefSeq" id="NP_001347528.1">
    <molecule id="Q8BG19-1"/>
    <property type="nucleotide sequence ID" value="NM_001360599.1"/>
</dbReference>
<dbReference type="RefSeq" id="NP_082927.1">
    <molecule id="Q8BG19-1"/>
    <property type="nucleotide sequence ID" value="NM_028651.3"/>
</dbReference>
<dbReference type="RefSeq" id="XP_006519572.1">
    <property type="nucleotide sequence ID" value="XM_006519509.3"/>
</dbReference>
<dbReference type="RefSeq" id="XP_006519573.1">
    <molecule id="Q8BG19-1"/>
    <property type="nucleotide sequence ID" value="XM_006519510.3"/>
</dbReference>
<dbReference type="RefSeq" id="XP_006519575.1">
    <property type="nucleotide sequence ID" value="XM_006519512.1"/>
</dbReference>
<dbReference type="RefSeq" id="XP_017171672.1">
    <property type="nucleotide sequence ID" value="XM_017316183.1"/>
</dbReference>
<dbReference type="RefSeq" id="XP_017171673.1">
    <property type="nucleotide sequence ID" value="XM_017316184.1"/>
</dbReference>
<dbReference type="SMR" id="Q8BG19"/>
<dbReference type="FunCoup" id="Q8BG19">
    <property type="interactions" value="1508"/>
</dbReference>
<dbReference type="STRING" id="10090.ENSMUSP00000046368"/>
<dbReference type="GlyConnect" id="2782">
    <property type="glycosylation" value="4 N-Linked glycans (1 site)"/>
</dbReference>
<dbReference type="GlyCosmos" id="Q8BG19">
    <property type="glycosylation" value="1 site, 4 glycans"/>
</dbReference>
<dbReference type="GlyGen" id="Q8BG19">
    <property type="glycosylation" value="4 sites, 7 N-linked glycans (3 sites)"/>
</dbReference>
<dbReference type="iPTMnet" id="Q8BG19"/>
<dbReference type="PhosphoSitePlus" id="Q8BG19"/>
<dbReference type="PaxDb" id="10090-ENSMUSP00000046368"/>
<dbReference type="PeptideAtlas" id="Q8BG19"/>
<dbReference type="ProteomicsDB" id="259054">
    <molecule id="Q8BG19-1"/>
</dbReference>
<dbReference type="ProteomicsDB" id="259055">
    <molecule id="Q8BG19-2"/>
</dbReference>
<dbReference type="ProteomicsDB" id="259056">
    <molecule id="Q8BG19-3"/>
</dbReference>
<dbReference type="Pumba" id="Q8BG19"/>
<dbReference type="Antibodypedia" id="11042">
    <property type="antibodies" value="122 antibodies from 17 providers"/>
</dbReference>
<dbReference type="DNASU" id="70551"/>
<dbReference type="Ensembl" id="ENSMUST00000037726.14">
    <molecule id="Q8BG19-1"/>
    <property type="protein sequence ID" value="ENSMUSP00000046368.8"/>
    <property type="gene ID" value="ENSMUSG00000041594.19"/>
</dbReference>
<dbReference type="Ensembl" id="ENSMUST00000126867.8">
    <molecule id="Q8BG19-1"/>
    <property type="protein sequence ID" value="ENSMUSP00000116379.2"/>
    <property type="gene ID" value="ENSMUSG00000041594.19"/>
</dbReference>
<dbReference type="Ensembl" id="ENSMUST00000148661.2">
    <molecule id="Q8BG19-1"/>
    <property type="protein sequence ID" value="ENSMUSP00000121523.2"/>
    <property type="gene ID" value="ENSMUSG00000041594.19"/>
</dbReference>
<dbReference type="GeneID" id="70551"/>
<dbReference type="KEGG" id="mmu:70551"/>
<dbReference type="UCSC" id="uc007vbi.1">
    <molecule id="Q8BG19-3"/>
    <property type="organism name" value="mouse"/>
</dbReference>
<dbReference type="UCSC" id="uc007vbj.1">
    <molecule id="Q8BG19-1"/>
    <property type="organism name" value="mouse"/>
</dbReference>
<dbReference type="UCSC" id="uc007vbm.1">
    <molecule id="Q8BG19-2"/>
    <property type="organism name" value="mouse"/>
</dbReference>
<dbReference type="AGR" id="MGI:1921050"/>
<dbReference type="CTD" id="84899"/>
<dbReference type="MGI" id="MGI:1921050">
    <property type="gene designation" value="Tmtc4"/>
</dbReference>
<dbReference type="VEuPathDB" id="HostDB:ENSMUSG00000041594"/>
<dbReference type="eggNOG" id="KOG1124">
    <property type="taxonomic scope" value="Eukaryota"/>
</dbReference>
<dbReference type="GeneTree" id="ENSGT00940000158521"/>
<dbReference type="HOGENOM" id="CLU_011615_2_0_1"/>
<dbReference type="InParanoid" id="Q8BG19"/>
<dbReference type="OMA" id="HWQHAVA"/>
<dbReference type="OrthoDB" id="19588at2759"/>
<dbReference type="PhylomeDB" id="Q8BG19"/>
<dbReference type="TreeFam" id="TF328339"/>
<dbReference type="UniPathway" id="UPA00378"/>
<dbReference type="BioGRID-ORCS" id="70551">
    <property type="hits" value="3 hits in 79 CRISPR screens"/>
</dbReference>
<dbReference type="ChiTaRS" id="Tmtc4">
    <property type="organism name" value="mouse"/>
</dbReference>
<dbReference type="PRO" id="PR:Q8BG19"/>
<dbReference type="Proteomes" id="UP000000589">
    <property type="component" value="Chromosome 14"/>
</dbReference>
<dbReference type="RNAct" id="Q8BG19">
    <property type="molecule type" value="protein"/>
</dbReference>
<dbReference type="Bgee" id="ENSMUSG00000041594">
    <property type="expression patterns" value="Expressed in barrel cortex and 252 other cell types or tissues"/>
</dbReference>
<dbReference type="ExpressionAtlas" id="Q8BG19">
    <property type="expression patterns" value="baseline and differential"/>
</dbReference>
<dbReference type="GO" id="GO:0005783">
    <property type="term" value="C:endoplasmic reticulum"/>
    <property type="evidence" value="ECO:0000266"/>
    <property type="project" value="MGI"/>
</dbReference>
<dbReference type="GO" id="GO:0016020">
    <property type="term" value="C:membrane"/>
    <property type="evidence" value="ECO:0007669"/>
    <property type="project" value="UniProtKB-SubCell"/>
</dbReference>
<dbReference type="GO" id="GO:0051117">
    <property type="term" value="F:ATPase binding"/>
    <property type="evidence" value="ECO:0000266"/>
    <property type="project" value="MGI"/>
</dbReference>
<dbReference type="GO" id="GO:0004169">
    <property type="term" value="F:dolichyl-phosphate-mannose-protein mannosyltransferase activity"/>
    <property type="evidence" value="ECO:0000250"/>
    <property type="project" value="UniProtKB"/>
</dbReference>
<dbReference type="GO" id="GO:0030968">
    <property type="term" value="P:endoplasmic reticulum unfolded protein response"/>
    <property type="evidence" value="ECO:0000315"/>
    <property type="project" value="MGI"/>
</dbReference>
<dbReference type="GO" id="GO:1905584">
    <property type="term" value="P:outer hair cell apoptotic process"/>
    <property type="evidence" value="ECO:0000315"/>
    <property type="project" value="MGI"/>
</dbReference>
<dbReference type="GO" id="GO:0032470">
    <property type="term" value="P:positive regulation of endoplasmic reticulum calcium ion concentration"/>
    <property type="evidence" value="ECO:0000315"/>
    <property type="project" value="MGI"/>
</dbReference>
<dbReference type="GO" id="GO:0035269">
    <property type="term" value="P:protein O-linked mannosylation"/>
    <property type="evidence" value="ECO:0000250"/>
    <property type="project" value="UniProtKB"/>
</dbReference>
<dbReference type="GO" id="GO:0007605">
    <property type="term" value="P:sensory perception of sound"/>
    <property type="evidence" value="ECO:0000315"/>
    <property type="project" value="MGI"/>
</dbReference>
<dbReference type="FunFam" id="1.25.40.10:FF:000456">
    <property type="entry name" value="transmembrane and TPR repeat-containing protein 4 isoform X2"/>
    <property type="match status" value="1"/>
</dbReference>
<dbReference type="Gene3D" id="1.25.40.10">
    <property type="entry name" value="Tetratricopeptide repeat domain"/>
    <property type="match status" value="1"/>
</dbReference>
<dbReference type="InterPro" id="IPR052346">
    <property type="entry name" value="O-mannosyl-transferase_TMTC"/>
</dbReference>
<dbReference type="InterPro" id="IPR013618">
    <property type="entry name" value="TMTC_DUF1736"/>
</dbReference>
<dbReference type="InterPro" id="IPR011990">
    <property type="entry name" value="TPR-like_helical_dom_sf"/>
</dbReference>
<dbReference type="InterPro" id="IPR019734">
    <property type="entry name" value="TPR_rpt"/>
</dbReference>
<dbReference type="PANTHER" id="PTHR44227">
    <property type="match status" value="1"/>
</dbReference>
<dbReference type="PANTHER" id="PTHR44227:SF3">
    <property type="entry name" value="PROTEIN O-MANNOSYL-TRANSFERASE TMTC4"/>
    <property type="match status" value="1"/>
</dbReference>
<dbReference type="Pfam" id="PF08409">
    <property type="entry name" value="TMTC_DUF1736"/>
    <property type="match status" value="1"/>
</dbReference>
<dbReference type="Pfam" id="PF00515">
    <property type="entry name" value="TPR_1"/>
    <property type="match status" value="1"/>
</dbReference>
<dbReference type="Pfam" id="PF13432">
    <property type="entry name" value="TPR_16"/>
    <property type="match status" value="2"/>
</dbReference>
<dbReference type="Pfam" id="PF13431">
    <property type="entry name" value="TPR_17"/>
    <property type="match status" value="1"/>
</dbReference>
<dbReference type="SMART" id="SM00028">
    <property type="entry name" value="TPR"/>
    <property type="match status" value="7"/>
</dbReference>
<dbReference type="SUPFAM" id="SSF48452">
    <property type="entry name" value="TPR-like"/>
    <property type="match status" value="1"/>
</dbReference>
<dbReference type="PROSITE" id="PS50005">
    <property type="entry name" value="TPR"/>
    <property type="match status" value="7"/>
</dbReference>
<dbReference type="PROSITE" id="PS50293">
    <property type="entry name" value="TPR_REGION"/>
    <property type="match status" value="4"/>
</dbReference>
<reference key="1">
    <citation type="journal article" date="2005" name="Science">
        <title>The transcriptional landscape of the mammalian genome.</title>
        <authorList>
            <person name="Carninci P."/>
            <person name="Kasukawa T."/>
            <person name="Katayama S."/>
            <person name="Gough J."/>
            <person name="Frith M.C."/>
            <person name="Maeda N."/>
            <person name="Oyama R."/>
            <person name="Ravasi T."/>
            <person name="Lenhard B."/>
            <person name="Wells C."/>
            <person name="Kodzius R."/>
            <person name="Shimokawa K."/>
            <person name="Bajic V.B."/>
            <person name="Brenner S.E."/>
            <person name="Batalov S."/>
            <person name="Forrest A.R."/>
            <person name="Zavolan M."/>
            <person name="Davis M.J."/>
            <person name="Wilming L.G."/>
            <person name="Aidinis V."/>
            <person name="Allen J.E."/>
            <person name="Ambesi-Impiombato A."/>
            <person name="Apweiler R."/>
            <person name="Aturaliya R.N."/>
            <person name="Bailey T.L."/>
            <person name="Bansal M."/>
            <person name="Baxter L."/>
            <person name="Beisel K.W."/>
            <person name="Bersano T."/>
            <person name="Bono H."/>
            <person name="Chalk A.M."/>
            <person name="Chiu K.P."/>
            <person name="Choudhary V."/>
            <person name="Christoffels A."/>
            <person name="Clutterbuck D.R."/>
            <person name="Crowe M.L."/>
            <person name="Dalla E."/>
            <person name="Dalrymple B.P."/>
            <person name="de Bono B."/>
            <person name="Della Gatta G."/>
            <person name="di Bernardo D."/>
            <person name="Down T."/>
            <person name="Engstrom P."/>
            <person name="Fagiolini M."/>
            <person name="Faulkner G."/>
            <person name="Fletcher C.F."/>
            <person name="Fukushima T."/>
            <person name="Furuno M."/>
            <person name="Futaki S."/>
            <person name="Gariboldi M."/>
            <person name="Georgii-Hemming P."/>
            <person name="Gingeras T.R."/>
            <person name="Gojobori T."/>
            <person name="Green R.E."/>
            <person name="Gustincich S."/>
            <person name="Harbers M."/>
            <person name="Hayashi Y."/>
            <person name="Hensch T.K."/>
            <person name="Hirokawa N."/>
            <person name="Hill D."/>
            <person name="Huminiecki L."/>
            <person name="Iacono M."/>
            <person name="Ikeo K."/>
            <person name="Iwama A."/>
            <person name="Ishikawa T."/>
            <person name="Jakt M."/>
            <person name="Kanapin A."/>
            <person name="Katoh M."/>
            <person name="Kawasawa Y."/>
            <person name="Kelso J."/>
            <person name="Kitamura H."/>
            <person name="Kitano H."/>
            <person name="Kollias G."/>
            <person name="Krishnan S.P."/>
            <person name="Kruger A."/>
            <person name="Kummerfeld S.K."/>
            <person name="Kurochkin I.V."/>
            <person name="Lareau L.F."/>
            <person name="Lazarevic D."/>
            <person name="Lipovich L."/>
            <person name="Liu J."/>
            <person name="Liuni S."/>
            <person name="McWilliam S."/>
            <person name="Madan Babu M."/>
            <person name="Madera M."/>
            <person name="Marchionni L."/>
            <person name="Matsuda H."/>
            <person name="Matsuzawa S."/>
            <person name="Miki H."/>
            <person name="Mignone F."/>
            <person name="Miyake S."/>
            <person name="Morris K."/>
            <person name="Mottagui-Tabar S."/>
            <person name="Mulder N."/>
            <person name="Nakano N."/>
            <person name="Nakauchi H."/>
            <person name="Ng P."/>
            <person name="Nilsson R."/>
            <person name="Nishiguchi S."/>
            <person name="Nishikawa S."/>
            <person name="Nori F."/>
            <person name="Ohara O."/>
            <person name="Okazaki Y."/>
            <person name="Orlando V."/>
            <person name="Pang K.C."/>
            <person name="Pavan W.J."/>
            <person name="Pavesi G."/>
            <person name="Pesole G."/>
            <person name="Petrovsky N."/>
            <person name="Piazza S."/>
            <person name="Reed J."/>
            <person name="Reid J.F."/>
            <person name="Ring B.Z."/>
            <person name="Ringwald M."/>
            <person name="Rost B."/>
            <person name="Ruan Y."/>
            <person name="Salzberg S.L."/>
            <person name="Sandelin A."/>
            <person name="Schneider C."/>
            <person name="Schoenbach C."/>
            <person name="Sekiguchi K."/>
            <person name="Semple C.A."/>
            <person name="Seno S."/>
            <person name="Sessa L."/>
            <person name="Sheng Y."/>
            <person name="Shibata Y."/>
            <person name="Shimada H."/>
            <person name="Shimada K."/>
            <person name="Silva D."/>
            <person name="Sinclair B."/>
            <person name="Sperling S."/>
            <person name="Stupka E."/>
            <person name="Sugiura K."/>
            <person name="Sultana R."/>
            <person name="Takenaka Y."/>
            <person name="Taki K."/>
            <person name="Tammoja K."/>
            <person name="Tan S.L."/>
            <person name="Tang S."/>
            <person name="Taylor M.S."/>
            <person name="Tegner J."/>
            <person name="Teichmann S.A."/>
            <person name="Ueda H.R."/>
            <person name="van Nimwegen E."/>
            <person name="Verardo R."/>
            <person name="Wei C.L."/>
            <person name="Yagi K."/>
            <person name="Yamanishi H."/>
            <person name="Zabarovsky E."/>
            <person name="Zhu S."/>
            <person name="Zimmer A."/>
            <person name="Hide W."/>
            <person name="Bult C."/>
            <person name="Grimmond S.M."/>
            <person name="Teasdale R.D."/>
            <person name="Liu E.T."/>
            <person name="Brusic V."/>
            <person name="Quackenbush J."/>
            <person name="Wahlestedt C."/>
            <person name="Mattick J.S."/>
            <person name="Hume D.A."/>
            <person name="Kai C."/>
            <person name="Sasaki D."/>
            <person name="Tomaru Y."/>
            <person name="Fukuda S."/>
            <person name="Kanamori-Katayama M."/>
            <person name="Suzuki M."/>
            <person name="Aoki J."/>
            <person name="Arakawa T."/>
            <person name="Iida J."/>
            <person name="Imamura K."/>
            <person name="Itoh M."/>
            <person name="Kato T."/>
            <person name="Kawaji H."/>
            <person name="Kawagashira N."/>
            <person name="Kawashima T."/>
            <person name="Kojima M."/>
            <person name="Kondo S."/>
            <person name="Konno H."/>
            <person name="Nakano K."/>
            <person name="Ninomiya N."/>
            <person name="Nishio T."/>
            <person name="Okada M."/>
            <person name="Plessy C."/>
            <person name="Shibata K."/>
            <person name="Shiraki T."/>
            <person name="Suzuki S."/>
            <person name="Tagami M."/>
            <person name="Waki K."/>
            <person name="Watahiki A."/>
            <person name="Okamura-Oho Y."/>
            <person name="Suzuki H."/>
            <person name="Kawai J."/>
            <person name="Hayashizaki Y."/>
        </authorList>
    </citation>
    <scope>NUCLEOTIDE SEQUENCE [LARGE SCALE MRNA] (ISOFORS 1; 2 AND 3)</scope>
    <source>
        <strain>C57BL/6J</strain>
        <tissue>Cerebellum</tissue>
        <tissue>Diencephalon</tissue>
        <tissue>Embryo</tissue>
        <tissue>Hypothalamus</tissue>
        <tissue>Retina</tissue>
        <tissue>Spinal cord</tissue>
        <tissue>Testis</tissue>
    </source>
</reference>
<reference key="2">
    <citation type="journal article" date="2004" name="Genome Res.">
        <title>The status, quality, and expansion of the NIH full-length cDNA project: the Mammalian Gene Collection (MGC).</title>
        <authorList>
            <consortium name="The MGC Project Team"/>
        </authorList>
    </citation>
    <scope>NUCLEOTIDE SEQUENCE [LARGE SCALE MRNA] OF 162-741 (ISOFORM 1)</scope>
    <source>
        <strain>FVB/N</strain>
        <tissue>Mammary tumor</tissue>
    </source>
</reference>
<reference key="3">
    <citation type="journal article" date="2023" name="JCI Insight">
        <title>TMTC4 is a hair cell-specific human deafness gene.</title>
        <authorList>
            <person name="Li J."/>
            <person name="Choi B.Y."/>
            <person name="Eltawil Y."/>
            <person name="Ismail Mohamad N."/>
            <person name="Park Y."/>
            <person name="Matthews I.R."/>
            <person name="Han J.H."/>
            <person name="Kim B.J."/>
            <person name="Sherr E.H."/>
            <person name="Chan D.K."/>
        </authorList>
    </citation>
    <scope>DISRUPTION PHENOTYPE</scope>
</reference>
<sequence length="741" mass="82963">MVELDADLDHIVPSVLPPFWAKLVVGFVSLLCFARSYDGDFVFDDSEAIVNNKDLQSDTPLGDLWHHDFWGSKLSSNTSHKSYRPLTVLTFRINYYLSGGFHPVGFHVVNILLHGSISILMLDVFSVLFGGLQYTGKGQRVHLAPRASLLATLLFAVHPVHTECVAGVVGRADLLCALFFLLSFLGYCQAFKETGNKEGTHSSTFWVLLSIFLGAVAMLCKEQGITVLGLNAVFDILVIGKLDILAAVRKVLHKDKSQENAGMFKNGGLLFRIALLTIGGTSMLYIRWKIMGTGPPAFTEVDNPASFADSMLVRAINYNYYYSLNAWLLLCPWWLCFDWSMGCIPLIKSVGDWRVIALAALWLCLIGLIFQALCSEDSCKRRILTLGLGFLVIPFLPASNLFFRVGFVVAERVLYLPSAGYCVLLTFGFGALSRHTKKKKPVAAIILGILLINALRCVIRSGEWRSEEQLFRSALSVCPLNAKVHYNIGKNLADQGNQTAAIKYYREAVRLNPKYVHAMNNLGNILKERNELQEAEELLSLAVQIQPDFAAAWMNLGIVQNSLKRFEEAEQSYRTAIKHRRKYPDCYYNLGRLYADLNRHVDALNAWRNATVLKPEHSLAWNNMIILLDNTGNLAQAEAVGREALQLIPNDHSLMFSLANVLGKSQKYKESEALFLKAIKANPNVASYHGNLAVLYHRWGHLDSAKKHYEISLQLDPVAVGTKENYSLLRRKLEQTQKKDV</sequence>
<accession>Q8BG19</accession>
<accession>Q8BT03</accession>
<accession>Q8C4D2</accession>
<accession>Q8CAC3</accession>
<accession>Q8K0I2</accession>
<accession>Q9CS83</accession>
<accession>Q9D5P3</accession>
<name>TMTC4_MOUSE</name>
<comment type="function">
    <text evidence="1">Transfers mannosyl residues to the hydroxyl group of serine or threonine residues. The 4 members of the TMTC family are O-mannosyl-transferases dedicated primarily to the cadherin superfamily, each member seems to have a distinct role in decorating the cadherin domains with O-linked mannose glycans at specific regions. Also acts as O-mannosyl-transferase on other proteins such as PDIA3.</text>
</comment>
<comment type="catalytic activity">
    <reaction evidence="1">
        <text>a di-trans,poly-cis-dolichyl beta-D-mannosyl phosphate + L-seryl-[protein] = 3-O-(alpha-D-mannosyl)-L-seryl-[protein] + a di-trans,poly-cis-dolichyl phosphate + H(+)</text>
        <dbReference type="Rhea" id="RHEA:17377"/>
        <dbReference type="Rhea" id="RHEA-COMP:9863"/>
        <dbReference type="Rhea" id="RHEA-COMP:13546"/>
        <dbReference type="Rhea" id="RHEA-COMP:19498"/>
        <dbReference type="Rhea" id="RHEA-COMP:19501"/>
        <dbReference type="ChEBI" id="CHEBI:15378"/>
        <dbReference type="ChEBI" id="CHEBI:29999"/>
        <dbReference type="ChEBI" id="CHEBI:57683"/>
        <dbReference type="ChEBI" id="CHEBI:58211"/>
        <dbReference type="ChEBI" id="CHEBI:137321"/>
        <dbReference type="EC" id="2.4.1.109"/>
    </reaction>
</comment>
<comment type="catalytic activity">
    <reaction evidence="1">
        <text>a di-trans,poly-cis-dolichyl beta-D-mannosyl phosphate + L-threonyl-[protein] = 3-O-(alpha-D-mannosyl)-L-threonyl-[protein] + a di-trans,poly-cis-dolichyl phosphate + H(+)</text>
        <dbReference type="Rhea" id="RHEA:53396"/>
        <dbReference type="Rhea" id="RHEA-COMP:11060"/>
        <dbReference type="Rhea" id="RHEA-COMP:13547"/>
        <dbReference type="Rhea" id="RHEA-COMP:19498"/>
        <dbReference type="Rhea" id="RHEA-COMP:19501"/>
        <dbReference type="ChEBI" id="CHEBI:15378"/>
        <dbReference type="ChEBI" id="CHEBI:30013"/>
        <dbReference type="ChEBI" id="CHEBI:57683"/>
        <dbReference type="ChEBI" id="CHEBI:58211"/>
        <dbReference type="ChEBI" id="CHEBI:137323"/>
        <dbReference type="EC" id="2.4.1.109"/>
    </reaction>
</comment>
<comment type="pathway">
    <text evidence="1">Protein modification; protein glycosylation.</text>
</comment>
<comment type="subcellular location">
    <subcellularLocation>
        <location evidence="6">Membrane</location>
        <topology evidence="6">Multi-pass membrane protein</topology>
    </subcellularLocation>
    <subcellularLocation>
        <location evidence="1">Endoplasmic reticulum</location>
    </subcellularLocation>
</comment>
<comment type="alternative products">
    <event type="alternative splicing"/>
    <isoform>
        <id>Q8BG19-1</id>
        <name>1</name>
        <sequence type="displayed"/>
    </isoform>
    <isoform>
        <id>Q8BG19-2</id>
        <name>2</name>
        <sequence type="described" ref="VSP_023625 VSP_023626"/>
    </isoform>
    <isoform>
        <id>Q8BG19-3</id>
        <name>3</name>
        <sequence type="described" ref="VSP_023624"/>
    </isoform>
</comment>
<comment type="disruption phenotype">
    <text evidence="5">TMTC4 conditional knockout in cochlear hair cells results in postnatal progressive hearing loss. Mutant mice have normal hearing at day P13 and are completely deaf by day P26.</text>
</comment>
<comment type="similarity">
    <text evidence="6">Belongs to the TMTC family.</text>
</comment>
<comment type="sequence caution" evidence="6">
    <conflict type="erroneous initiation">
        <sequence resource="EMBL-CDS" id="AAH31368"/>
    </conflict>
    <text>Truncated N-terminus.</text>
</comment>
<comment type="sequence caution" evidence="6">
    <conflict type="frameshift">
        <sequence resource="EMBL-CDS" id="BAC30236"/>
    </conflict>
</comment>
<comment type="sequence caution" evidence="6">
    <conflict type="erroneous initiation">
        <sequence resource="EMBL-CDS" id="BAC38520"/>
    </conflict>
    <text>Truncated N-terminus.</text>
</comment>
<evidence type="ECO:0000250" key="1">
    <source>
        <dbReference type="UniProtKB" id="Q5T4D3"/>
    </source>
</evidence>
<evidence type="ECO:0000255" key="2"/>
<evidence type="ECO:0000255" key="3">
    <source>
        <dbReference type="PROSITE-ProRule" id="PRU00339"/>
    </source>
</evidence>
<evidence type="ECO:0000255" key="4">
    <source>
        <dbReference type="PROSITE-ProRule" id="PRU00498"/>
    </source>
</evidence>
<evidence type="ECO:0000269" key="5">
    <source>
    </source>
</evidence>
<evidence type="ECO:0000305" key="6"/>
<evidence type="ECO:0000312" key="7">
    <source>
        <dbReference type="MGI" id="MGI:1921050"/>
    </source>
</evidence>